<sequence>MAVPISTVAETKELRGLNLIAAHSHIRGLGVDADSLQPRTSSQGLVGQEKARKAAAVILQMVKEGKIAGRAVLIAGPPSTGKTAIAMGMAQSLGSDVPFTMLAASEIFSMEMSKTEALTQAFRKSIGVRIKEESEIIEGEVVEIQVDRSVTGGNKQGKLTIKTTDMETIYDMGTKMIDSMTKERVMAGDVISIDKSSGKITKLGRSYARSRDYDAMGADTKFVQCPEGELQVRKEIVHTVSLHEIDVINSRTQGFLALFSGDTGEIRSEVRDQINTKVAEWKEEGKAEIIPGVLFIDEVHMLDIECFSYINRALEAELAPIVIMASNRGQARIRGTTYTSPHGLPLDFLDRVVIVSTQPYSGDEIRQILAIRAQEEEIDLSPDALALLTKIGQESNLRYASNIITTSHLLSQKRKAKEVSIDDVQRSYRLFYDPARSVKFVNAYEQRFIGDQGAVNFSAPANGDAMEIS</sequence>
<accession>Q4WKH9</accession>
<keyword id="KW-0010">Activator</keyword>
<keyword id="KW-0067">ATP-binding</keyword>
<keyword id="KW-0156">Chromatin regulator</keyword>
<keyword id="KW-0227">DNA damage</keyword>
<keyword id="KW-0234">DNA repair</keyword>
<keyword id="KW-0347">Helicase</keyword>
<keyword id="KW-0378">Hydrolase</keyword>
<keyword id="KW-0547">Nucleotide-binding</keyword>
<keyword id="KW-0539">Nucleus</keyword>
<keyword id="KW-1185">Reference proteome</keyword>
<keyword id="KW-0698">rRNA processing</keyword>
<keyword id="KW-0804">Transcription</keyword>
<keyword id="KW-0805">Transcription regulation</keyword>
<feature type="chain" id="PRO_0000165663" description="RuvB-like helicase 2">
    <location>
        <begin position="1"/>
        <end position="469"/>
    </location>
</feature>
<feature type="binding site" evidence="1">
    <location>
        <begin position="76"/>
        <end position="83"/>
    </location>
    <ligand>
        <name>ATP</name>
        <dbReference type="ChEBI" id="CHEBI:30616"/>
    </ligand>
</feature>
<comment type="function">
    <text evidence="1">DNA helicase which participates in several chromatin remodeling complexes, including the SWR1 and the INO80 complexes. The SWR1 complex mediates the ATP-dependent exchange of histone H2A for the H2A variant HZT1 leading to transcriptional regulation of selected genes by chromatin remodeling. The INO80 complex remodels chromatin by shifting nucleosomes and is involved in DNA repair. Also involved in pre-rRNA processing (By similarity).</text>
</comment>
<comment type="catalytic activity">
    <reaction>
        <text>ATP + H2O = ADP + phosphate + H(+)</text>
        <dbReference type="Rhea" id="RHEA:13065"/>
        <dbReference type="ChEBI" id="CHEBI:15377"/>
        <dbReference type="ChEBI" id="CHEBI:15378"/>
        <dbReference type="ChEBI" id="CHEBI:30616"/>
        <dbReference type="ChEBI" id="CHEBI:43474"/>
        <dbReference type="ChEBI" id="CHEBI:456216"/>
        <dbReference type="EC" id="3.6.4.12"/>
    </reaction>
</comment>
<comment type="subunit">
    <text evidence="1">May form heterododecamers with RVB1. Component of the SWR1 chromatin remodeling complex, the INO80 chromatin remodeling complex, and of the R2TP complex (By similarity).</text>
</comment>
<comment type="subcellular location">
    <subcellularLocation>
        <location evidence="1">Nucleus</location>
    </subcellularLocation>
</comment>
<comment type="similarity">
    <text evidence="2">Belongs to the RuvB family.</text>
</comment>
<dbReference type="EC" id="3.6.4.12"/>
<dbReference type="EMBL" id="AAHF01000007">
    <property type="protein sequence ID" value="EAL87953.1"/>
    <property type="molecule type" value="Genomic_DNA"/>
</dbReference>
<dbReference type="RefSeq" id="XP_749991.1">
    <property type="nucleotide sequence ID" value="XM_744898.1"/>
</dbReference>
<dbReference type="SMR" id="Q4WKH9"/>
<dbReference type="FunCoup" id="Q4WKH9">
    <property type="interactions" value="1422"/>
</dbReference>
<dbReference type="STRING" id="330879.Q4WKH9"/>
<dbReference type="EnsemblFungi" id="EAL87953">
    <property type="protein sequence ID" value="EAL87953"/>
    <property type="gene ID" value="AFUA_1G02410"/>
</dbReference>
<dbReference type="GeneID" id="3507931"/>
<dbReference type="KEGG" id="afm:AFUA_1G02410"/>
<dbReference type="VEuPathDB" id="FungiDB:Afu1g02410"/>
<dbReference type="eggNOG" id="KOG2680">
    <property type="taxonomic scope" value="Eukaryota"/>
</dbReference>
<dbReference type="HOGENOM" id="CLU_028311_4_0_1"/>
<dbReference type="InParanoid" id="Q4WKH9"/>
<dbReference type="OMA" id="IINTEPY"/>
<dbReference type="OrthoDB" id="10060499at2759"/>
<dbReference type="Proteomes" id="UP000002530">
    <property type="component" value="Chromosome 1"/>
</dbReference>
<dbReference type="GO" id="GO:0031011">
    <property type="term" value="C:Ino80 complex"/>
    <property type="evidence" value="ECO:0000318"/>
    <property type="project" value="GO_Central"/>
</dbReference>
<dbReference type="GO" id="GO:0035267">
    <property type="term" value="C:NuA4 histone acetyltransferase complex"/>
    <property type="evidence" value="ECO:0000318"/>
    <property type="project" value="GO_Central"/>
</dbReference>
<dbReference type="GO" id="GO:0097255">
    <property type="term" value="C:R2TP complex"/>
    <property type="evidence" value="ECO:0000318"/>
    <property type="project" value="GO_Central"/>
</dbReference>
<dbReference type="GO" id="GO:0000812">
    <property type="term" value="C:Swr1 complex"/>
    <property type="evidence" value="ECO:0000318"/>
    <property type="project" value="GO_Central"/>
</dbReference>
<dbReference type="GO" id="GO:0043138">
    <property type="term" value="F:3'-5' DNA helicase activity"/>
    <property type="evidence" value="ECO:0007669"/>
    <property type="project" value="EnsemblFungi"/>
</dbReference>
<dbReference type="GO" id="GO:0043139">
    <property type="term" value="F:5'-3' DNA helicase activity"/>
    <property type="evidence" value="ECO:0007669"/>
    <property type="project" value="EnsemblFungi"/>
</dbReference>
<dbReference type="GO" id="GO:0005524">
    <property type="term" value="F:ATP binding"/>
    <property type="evidence" value="ECO:0007669"/>
    <property type="project" value="UniProtKB-KW"/>
</dbReference>
<dbReference type="GO" id="GO:0016887">
    <property type="term" value="F:ATP hydrolysis activity"/>
    <property type="evidence" value="ECO:0007669"/>
    <property type="project" value="InterPro"/>
</dbReference>
<dbReference type="GO" id="GO:0003678">
    <property type="term" value="F:DNA helicase activity"/>
    <property type="evidence" value="ECO:0000318"/>
    <property type="project" value="GO_Central"/>
</dbReference>
<dbReference type="GO" id="GO:0000492">
    <property type="term" value="P:box C/D snoRNP assembly"/>
    <property type="evidence" value="ECO:0000318"/>
    <property type="project" value="GO_Central"/>
</dbReference>
<dbReference type="GO" id="GO:0006338">
    <property type="term" value="P:chromatin remodeling"/>
    <property type="evidence" value="ECO:0000318"/>
    <property type="project" value="GO_Central"/>
</dbReference>
<dbReference type="GO" id="GO:0006281">
    <property type="term" value="P:DNA repair"/>
    <property type="evidence" value="ECO:0007669"/>
    <property type="project" value="UniProtKB-KW"/>
</dbReference>
<dbReference type="GO" id="GO:0006357">
    <property type="term" value="P:regulation of transcription by RNA polymerase II"/>
    <property type="evidence" value="ECO:0000318"/>
    <property type="project" value="GO_Central"/>
</dbReference>
<dbReference type="GO" id="GO:0006364">
    <property type="term" value="P:rRNA processing"/>
    <property type="evidence" value="ECO:0007669"/>
    <property type="project" value="UniProtKB-KW"/>
</dbReference>
<dbReference type="FunFam" id="3.40.50.300:FF:002221">
    <property type="entry name" value="RuvB-like 2"/>
    <property type="match status" value="2"/>
</dbReference>
<dbReference type="FunFam" id="1.10.8.60:FF:000010">
    <property type="entry name" value="RuvB-like helicase"/>
    <property type="match status" value="1"/>
</dbReference>
<dbReference type="FunFam" id="2.40.50.360:FF:000002">
    <property type="entry name" value="RuvB-like helicase"/>
    <property type="match status" value="1"/>
</dbReference>
<dbReference type="Gene3D" id="1.10.8.60">
    <property type="match status" value="1"/>
</dbReference>
<dbReference type="Gene3D" id="3.40.50.300">
    <property type="entry name" value="P-loop containing nucleotide triphosphate hydrolases"/>
    <property type="match status" value="1"/>
</dbReference>
<dbReference type="Gene3D" id="2.40.50.360">
    <property type="entry name" value="RuvB-like helicase, domain II"/>
    <property type="match status" value="1"/>
</dbReference>
<dbReference type="InterPro" id="IPR003593">
    <property type="entry name" value="AAA+_ATPase"/>
</dbReference>
<dbReference type="InterPro" id="IPR027417">
    <property type="entry name" value="P-loop_NTPase"/>
</dbReference>
<dbReference type="InterPro" id="IPR027238">
    <property type="entry name" value="RuvB-like"/>
</dbReference>
<dbReference type="InterPro" id="IPR041048">
    <property type="entry name" value="RuvB-like_C"/>
</dbReference>
<dbReference type="InterPro" id="IPR042487">
    <property type="entry name" value="RuvBL1/2_DNA/RNA_bd_dom"/>
</dbReference>
<dbReference type="InterPro" id="IPR010339">
    <property type="entry name" value="TIP49_P-loop"/>
</dbReference>
<dbReference type="PANTHER" id="PTHR11093">
    <property type="entry name" value="RUVB-RELATED REPTIN AND PONTIN"/>
    <property type="match status" value="1"/>
</dbReference>
<dbReference type="Pfam" id="PF06068">
    <property type="entry name" value="TIP49"/>
    <property type="match status" value="1"/>
</dbReference>
<dbReference type="Pfam" id="PF17856">
    <property type="entry name" value="TIP49_C"/>
    <property type="match status" value="1"/>
</dbReference>
<dbReference type="SMART" id="SM00382">
    <property type="entry name" value="AAA"/>
    <property type="match status" value="1"/>
</dbReference>
<dbReference type="SUPFAM" id="SSF52540">
    <property type="entry name" value="P-loop containing nucleoside triphosphate hydrolases"/>
    <property type="match status" value="1"/>
</dbReference>
<organism>
    <name type="scientific">Aspergillus fumigatus (strain ATCC MYA-4609 / CBS 101355 / FGSC A1100 / Af293)</name>
    <name type="common">Neosartorya fumigata</name>
    <dbReference type="NCBI Taxonomy" id="330879"/>
    <lineage>
        <taxon>Eukaryota</taxon>
        <taxon>Fungi</taxon>
        <taxon>Dikarya</taxon>
        <taxon>Ascomycota</taxon>
        <taxon>Pezizomycotina</taxon>
        <taxon>Eurotiomycetes</taxon>
        <taxon>Eurotiomycetidae</taxon>
        <taxon>Eurotiales</taxon>
        <taxon>Aspergillaceae</taxon>
        <taxon>Aspergillus</taxon>
        <taxon>Aspergillus subgen. Fumigati</taxon>
    </lineage>
</organism>
<name>RUVB2_ASPFU</name>
<reference key="1">
    <citation type="journal article" date="2005" name="Nature">
        <title>Genomic sequence of the pathogenic and allergenic filamentous fungus Aspergillus fumigatus.</title>
        <authorList>
            <person name="Nierman W.C."/>
            <person name="Pain A."/>
            <person name="Anderson M.J."/>
            <person name="Wortman J.R."/>
            <person name="Kim H.S."/>
            <person name="Arroyo J."/>
            <person name="Berriman M."/>
            <person name="Abe K."/>
            <person name="Archer D.B."/>
            <person name="Bermejo C."/>
            <person name="Bennett J.W."/>
            <person name="Bowyer P."/>
            <person name="Chen D."/>
            <person name="Collins M."/>
            <person name="Coulsen R."/>
            <person name="Davies R."/>
            <person name="Dyer P.S."/>
            <person name="Farman M.L."/>
            <person name="Fedorova N."/>
            <person name="Fedorova N.D."/>
            <person name="Feldblyum T.V."/>
            <person name="Fischer R."/>
            <person name="Fosker N."/>
            <person name="Fraser A."/>
            <person name="Garcia J.L."/>
            <person name="Garcia M.J."/>
            <person name="Goble A."/>
            <person name="Goldman G.H."/>
            <person name="Gomi K."/>
            <person name="Griffith-Jones S."/>
            <person name="Gwilliam R."/>
            <person name="Haas B.J."/>
            <person name="Haas H."/>
            <person name="Harris D.E."/>
            <person name="Horiuchi H."/>
            <person name="Huang J."/>
            <person name="Humphray S."/>
            <person name="Jimenez J."/>
            <person name="Keller N."/>
            <person name="Khouri H."/>
            <person name="Kitamoto K."/>
            <person name="Kobayashi T."/>
            <person name="Konzack S."/>
            <person name="Kulkarni R."/>
            <person name="Kumagai T."/>
            <person name="Lafton A."/>
            <person name="Latge J.-P."/>
            <person name="Li W."/>
            <person name="Lord A."/>
            <person name="Lu C."/>
            <person name="Majoros W.H."/>
            <person name="May G.S."/>
            <person name="Miller B.L."/>
            <person name="Mohamoud Y."/>
            <person name="Molina M."/>
            <person name="Monod M."/>
            <person name="Mouyna I."/>
            <person name="Mulligan S."/>
            <person name="Murphy L.D."/>
            <person name="O'Neil S."/>
            <person name="Paulsen I."/>
            <person name="Penalva M.A."/>
            <person name="Pertea M."/>
            <person name="Price C."/>
            <person name="Pritchard B.L."/>
            <person name="Quail M.A."/>
            <person name="Rabbinowitsch E."/>
            <person name="Rawlins N."/>
            <person name="Rajandream M.A."/>
            <person name="Reichard U."/>
            <person name="Renauld H."/>
            <person name="Robson G.D."/>
            <person name="Rodriguez de Cordoba S."/>
            <person name="Rodriguez-Pena J.M."/>
            <person name="Ronning C.M."/>
            <person name="Rutter S."/>
            <person name="Salzberg S.L."/>
            <person name="Sanchez M."/>
            <person name="Sanchez-Ferrero J.C."/>
            <person name="Saunders D."/>
            <person name="Seeger K."/>
            <person name="Squares R."/>
            <person name="Squares S."/>
            <person name="Takeuchi M."/>
            <person name="Tekaia F."/>
            <person name="Turner G."/>
            <person name="Vazquez de Aldana C.R."/>
            <person name="Weidman J."/>
            <person name="White O."/>
            <person name="Woodward J.R."/>
            <person name="Yu J.-H."/>
            <person name="Fraser C.M."/>
            <person name="Galagan J.E."/>
            <person name="Asai K."/>
            <person name="Machida M."/>
            <person name="Hall N."/>
            <person name="Barrell B.G."/>
            <person name="Denning D.W."/>
        </authorList>
    </citation>
    <scope>NUCLEOTIDE SEQUENCE [LARGE SCALE GENOMIC DNA]</scope>
    <source>
        <strain>ATCC MYA-4609 / CBS 101355 / FGSC A1100 / Af293</strain>
    </source>
</reference>
<protein>
    <recommendedName>
        <fullName>RuvB-like helicase 2</fullName>
        <ecNumber>3.6.4.12</ecNumber>
    </recommendedName>
</protein>
<evidence type="ECO:0000250" key="1"/>
<evidence type="ECO:0000305" key="2"/>
<proteinExistence type="inferred from homology"/>
<gene>
    <name type="primary">rvb2</name>
    <name type="ORF">AFUA_1G02410</name>
</gene>